<keyword id="KW-0325">Glycoprotein</keyword>
<keyword id="KW-0328">Glycosyltransferase</keyword>
<keyword id="KW-0333">Golgi apparatus</keyword>
<keyword id="KW-0472">Membrane</keyword>
<keyword id="KW-1185">Reference proteome</keyword>
<keyword id="KW-0735">Signal-anchor</keyword>
<keyword id="KW-0808">Transferase</keyword>
<keyword id="KW-0812">Transmembrane</keyword>
<keyword id="KW-1133">Transmembrane helix</keyword>
<organism>
    <name type="scientific">Arabidopsis thaliana</name>
    <name type="common">Mouse-ear cress</name>
    <dbReference type="NCBI Taxonomy" id="3702"/>
    <lineage>
        <taxon>Eukaryota</taxon>
        <taxon>Viridiplantae</taxon>
        <taxon>Streptophyta</taxon>
        <taxon>Embryophyta</taxon>
        <taxon>Tracheophyta</taxon>
        <taxon>Spermatophyta</taxon>
        <taxon>Magnoliopsida</taxon>
        <taxon>eudicotyledons</taxon>
        <taxon>Gunneridae</taxon>
        <taxon>Pentapetalae</taxon>
        <taxon>rosids</taxon>
        <taxon>malvids</taxon>
        <taxon>Brassicales</taxon>
        <taxon>Brassicaceae</taxon>
        <taxon>Camelineae</taxon>
        <taxon>Arabidopsis</taxon>
    </lineage>
</organism>
<sequence length="432" mass="50295">MGKPGGAKTRTAVCLSDGVFFLAGAFMSLTLVWSYFSIFSPSFTSLRHDGKPVQCSGLDMQFDPSEPGFYDDPDLSYSIEKPITKWDEKRNQWFESHPSFKPGSENRIVMVTGSQSSPCKNPIGDHLLLRCFKNKVDYARIHGHDIFYSNSLLHPKMNSYWAKLPVVKAAMLAHPEAEWIWWVDSDAIFTDMEFKPPLHRYRQHNLVVHGWPNIIYEKQSWTALNAGVFLIRNCQWSMDLIDTWKSMGPVSPDYKKWGPIQRSIFKDKLFPESDDQTALIYLLYKHKELYYPKIYLEAEYYLQGYWIGVFGDFANVTERYLEMEREDDTLRRRHAEKVSERYGAFREERFLKGEFGGRGSRRRAFITHFTGCQPCSGDHNPSYDGDTCWNEMIRALNFADNQVMRVYGYVHSDLSKTSPLQPLPFDYPNEAW</sequence>
<protein>
    <recommendedName>
        <fullName>Glycosyltransferase 6</fullName>
        <shortName>AtGT6</shortName>
        <ecNumber>2.4.-.-</ecNumber>
    </recommendedName>
</protein>
<accession>Q9SZG1</accession>
<accession>Q0V7Q4</accession>
<evidence type="ECO:0000250" key="1">
    <source>
        <dbReference type="UniProtKB" id="Q9CA75"/>
    </source>
</evidence>
<evidence type="ECO:0000255" key="2"/>
<evidence type="ECO:0000305" key="3"/>
<comment type="function">
    <text evidence="1">Probable glycosyltransferase that may be involved in the biosynthesis of xyloglucan.</text>
</comment>
<comment type="subcellular location">
    <subcellularLocation>
        <location evidence="3">Golgi apparatus membrane</location>
        <topology evidence="3">Single-pass type II membrane protein</topology>
    </subcellularLocation>
</comment>
<comment type="similarity">
    <text evidence="3">Belongs to the glycosyltransferase 34 family.</text>
</comment>
<reference key="1">
    <citation type="journal article" date="2014" name="Plant J.">
        <title>The plant glycosyltransferase clone collection for functional genomics.</title>
        <authorList>
            <person name="Lao J."/>
            <person name="Oikawa A."/>
            <person name="Bromley J.R."/>
            <person name="McInerney P."/>
            <person name="Suttangkakul A."/>
            <person name="Smith-Moritz A.M."/>
            <person name="Plahar H."/>
            <person name="Chiu T.-Y."/>
            <person name="Gonzalez Fernandez-Nino S.M.G."/>
            <person name="Ebert B."/>
            <person name="Yang F."/>
            <person name="Christiansen K.M."/>
            <person name="Hansen S.F."/>
            <person name="Stonebloom S."/>
            <person name="Adams P.D."/>
            <person name="Ronald P.C."/>
            <person name="Hillson N.J."/>
            <person name="Hadi M.Z."/>
            <person name="Vega-Sanchez M.E."/>
            <person name="Loque D."/>
            <person name="Scheller H.V."/>
            <person name="Heazlewood J.L."/>
        </authorList>
    </citation>
    <scope>NUCLEOTIDE SEQUENCE [MRNA]</scope>
    <source>
        <strain>cv. Columbia</strain>
    </source>
</reference>
<reference key="2">
    <citation type="journal article" date="1999" name="Nature">
        <title>Sequence and analysis of chromosome 4 of the plant Arabidopsis thaliana.</title>
        <authorList>
            <person name="Mayer K.F.X."/>
            <person name="Schueller C."/>
            <person name="Wambutt R."/>
            <person name="Murphy G."/>
            <person name="Volckaert G."/>
            <person name="Pohl T."/>
            <person name="Duesterhoeft A."/>
            <person name="Stiekema W."/>
            <person name="Entian K.-D."/>
            <person name="Terryn N."/>
            <person name="Harris B."/>
            <person name="Ansorge W."/>
            <person name="Brandt P."/>
            <person name="Grivell L.A."/>
            <person name="Rieger M."/>
            <person name="Weichselgartner M."/>
            <person name="de Simone V."/>
            <person name="Obermaier B."/>
            <person name="Mache R."/>
            <person name="Mueller M."/>
            <person name="Kreis M."/>
            <person name="Delseny M."/>
            <person name="Puigdomenech P."/>
            <person name="Watson M."/>
            <person name="Schmidtheini T."/>
            <person name="Reichert B."/>
            <person name="Portetelle D."/>
            <person name="Perez-Alonso M."/>
            <person name="Boutry M."/>
            <person name="Bancroft I."/>
            <person name="Vos P."/>
            <person name="Hoheisel J."/>
            <person name="Zimmermann W."/>
            <person name="Wedler H."/>
            <person name="Ridley P."/>
            <person name="Langham S.-A."/>
            <person name="McCullagh B."/>
            <person name="Bilham L."/>
            <person name="Robben J."/>
            <person name="van der Schueren J."/>
            <person name="Grymonprez B."/>
            <person name="Chuang Y.-J."/>
            <person name="Vandenbussche F."/>
            <person name="Braeken M."/>
            <person name="Weltjens I."/>
            <person name="Voet M."/>
            <person name="Bastiaens I."/>
            <person name="Aert R."/>
            <person name="Defoor E."/>
            <person name="Weitzenegger T."/>
            <person name="Bothe G."/>
            <person name="Ramsperger U."/>
            <person name="Hilbert H."/>
            <person name="Braun M."/>
            <person name="Holzer E."/>
            <person name="Brandt A."/>
            <person name="Peters S."/>
            <person name="van Staveren M."/>
            <person name="Dirkse W."/>
            <person name="Mooijman P."/>
            <person name="Klein Lankhorst R."/>
            <person name="Rose M."/>
            <person name="Hauf J."/>
            <person name="Koetter P."/>
            <person name="Berneiser S."/>
            <person name="Hempel S."/>
            <person name="Feldpausch M."/>
            <person name="Lamberth S."/>
            <person name="Van den Daele H."/>
            <person name="De Keyser A."/>
            <person name="Buysshaert C."/>
            <person name="Gielen J."/>
            <person name="Villarroel R."/>
            <person name="De Clercq R."/>
            <person name="van Montagu M."/>
            <person name="Rogers J."/>
            <person name="Cronin A."/>
            <person name="Quail M.A."/>
            <person name="Bray-Allen S."/>
            <person name="Clark L."/>
            <person name="Doggett J."/>
            <person name="Hall S."/>
            <person name="Kay M."/>
            <person name="Lennard N."/>
            <person name="McLay K."/>
            <person name="Mayes R."/>
            <person name="Pettett A."/>
            <person name="Rajandream M.A."/>
            <person name="Lyne M."/>
            <person name="Benes V."/>
            <person name="Rechmann S."/>
            <person name="Borkova D."/>
            <person name="Bloecker H."/>
            <person name="Scharfe M."/>
            <person name="Grimm M."/>
            <person name="Loehnert T.-H."/>
            <person name="Dose S."/>
            <person name="de Haan M."/>
            <person name="Maarse A.C."/>
            <person name="Schaefer M."/>
            <person name="Mueller-Auer S."/>
            <person name="Gabel C."/>
            <person name="Fuchs M."/>
            <person name="Fartmann B."/>
            <person name="Granderath K."/>
            <person name="Dauner D."/>
            <person name="Herzl A."/>
            <person name="Neumann S."/>
            <person name="Argiriou A."/>
            <person name="Vitale D."/>
            <person name="Liguori R."/>
            <person name="Piravandi E."/>
            <person name="Massenet O."/>
            <person name="Quigley F."/>
            <person name="Clabauld G."/>
            <person name="Muendlein A."/>
            <person name="Felber R."/>
            <person name="Schnabl S."/>
            <person name="Hiller R."/>
            <person name="Schmidt W."/>
            <person name="Lecharny A."/>
            <person name="Aubourg S."/>
            <person name="Chefdor F."/>
            <person name="Cooke R."/>
            <person name="Berger C."/>
            <person name="Monfort A."/>
            <person name="Casacuberta E."/>
            <person name="Gibbons T."/>
            <person name="Weber N."/>
            <person name="Vandenbol M."/>
            <person name="Bargues M."/>
            <person name="Terol J."/>
            <person name="Torres A."/>
            <person name="Perez-Perez A."/>
            <person name="Purnelle B."/>
            <person name="Bent E."/>
            <person name="Johnson S."/>
            <person name="Tacon D."/>
            <person name="Jesse T."/>
            <person name="Heijnen L."/>
            <person name="Schwarz S."/>
            <person name="Scholler P."/>
            <person name="Heber S."/>
            <person name="Francs P."/>
            <person name="Bielke C."/>
            <person name="Frishman D."/>
            <person name="Haase D."/>
            <person name="Lemcke K."/>
            <person name="Mewes H.-W."/>
            <person name="Stocker S."/>
            <person name="Zaccaria P."/>
            <person name="Bevan M."/>
            <person name="Wilson R.K."/>
            <person name="de la Bastide M."/>
            <person name="Habermann K."/>
            <person name="Parnell L."/>
            <person name="Dedhia N."/>
            <person name="Gnoj L."/>
            <person name="Schutz K."/>
            <person name="Huang E."/>
            <person name="Spiegel L."/>
            <person name="Sekhon M."/>
            <person name="Murray J."/>
            <person name="Sheet P."/>
            <person name="Cordes M."/>
            <person name="Abu-Threideh J."/>
            <person name="Stoneking T."/>
            <person name="Kalicki J."/>
            <person name="Graves T."/>
            <person name="Harmon G."/>
            <person name="Edwards J."/>
            <person name="Latreille P."/>
            <person name="Courtney L."/>
            <person name="Cloud J."/>
            <person name="Abbott A."/>
            <person name="Scott K."/>
            <person name="Johnson D."/>
            <person name="Minx P."/>
            <person name="Bentley D."/>
            <person name="Fulton B."/>
            <person name="Miller N."/>
            <person name="Greco T."/>
            <person name="Kemp K."/>
            <person name="Kramer J."/>
            <person name="Fulton L."/>
            <person name="Mardis E."/>
            <person name="Dante M."/>
            <person name="Pepin K."/>
            <person name="Hillier L.W."/>
            <person name="Nelson J."/>
            <person name="Spieth J."/>
            <person name="Ryan E."/>
            <person name="Andrews S."/>
            <person name="Geisel C."/>
            <person name="Layman D."/>
            <person name="Du H."/>
            <person name="Ali J."/>
            <person name="Berghoff A."/>
            <person name="Jones K."/>
            <person name="Drone K."/>
            <person name="Cotton M."/>
            <person name="Joshu C."/>
            <person name="Antonoiu B."/>
            <person name="Zidanic M."/>
            <person name="Strong C."/>
            <person name="Sun H."/>
            <person name="Lamar B."/>
            <person name="Yordan C."/>
            <person name="Ma P."/>
            <person name="Zhong J."/>
            <person name="Preston R."/>
            <person name="Vil D."/>
            <person name="Shekher M."/>
            <person name="Matero A."/>
            <person name="Shah R."/>
            <person name="Swaby I.K."/>
            <person name="O'Shaughnessy A."/>
            <person name="Rodriguez M."/>
            <person name="Hoffman J."/>
            <person name="Till S."/>
            <person name="Granat S."/>
            <person name="Shohdy N."/>
            <person name="Hasegawa A."/>
            <person name="Hameed A."/>
            <person name="Lodhi M."/>
            <person name="Johnson A."/>
            <person name="Chen E."/>
            <person name="Marra M.A."/>
            <person name="Martienssen R."/>
            <person name="McCombie W.R."/>
        </authorList>
    </citation>
    <scope>NUCLEOTIDE SEQUENCE [LARGE SCALE GENOMIC DNA]</scope>
    <source>
        <strain>cv. Columbia</strain>
    </source>
</reference>
<reference key="3">
    <citation type="journal article" date="2017" name="Plant J.">
        <title>Araport11: a complete reannotation of the Arabidopsis thaliana reference genome.</title>
        <authorList>
            <person name="Cheng C.Y."/>
            <person name="Krishnakumar V."/>
            <person name="Chan A.P."/>
            <person name="Thibaud-Nissen F."/>
            <person name="Schobel S."/>
            <person name="Town C.D."/>
        </authorList>
    </citation>
    <scope>GENOME REANNOTATION</scope>
    <source>
        <strain>cv. Columbia</strain>
    </source>
</reference>
<reference key="4">
    <citation type="submission" date="2006-08" db="EMBL/GenBank/DDBJ databases">
        <title>Arabidopsis ORF Clones.</title>
        <authorList>
            <person name="Quinitio C."/>
            <person name="Chen H."/>
            <person name="Kim C.J."/>
            <person name="Shinn P."/>
            <person name="Ecker J.R."/>
        </authorList>
    </citation>
    <scope>NUCLEOTIDE SEQUENCE [LARGE SCALE MRNA]</scope>
    <source>
        <strain>cv. Columbia</strain>
    </source>
</reference>
<reference key="5">
    <citation type="submission" date="2004-09" db="EMBL/GenBank/DDBJ databases">
        <authorList>
            <consortium name="Center for eukaryotic structural genomics (CESG)"/>
        </authorList>
    </citation>
    <scope>NUCLEOTIDE SEQUENCE [LARGE SCALE MRNA] OF 35-432</scope>
</reference>
<reference key="6">
    <citation type="journal article" date="2002" name="Proc. Natl. Acad. Sci. U.S.A.">
        <title>An Arabidopsis gene encoding an alpha-xylosyltransferase involved in xyloglucan biosynthesis.</title>
        <authorList>
            <person name="Faik A."/>
            <person name="Price N.J."/>
            <person name="Raikhel N.V."/>
            <person name="Keegstra K."/>
        </authorList>
    </citation>
    <scope>GENE FAMILY</scope>
    <scope>NOMENCLATURE</scope>
</reference>
<gene>
    <name type="primary">GT6</name>
    <name type="ordered locus">At4g37690</name>
    <name type="ORF">F19F18.180</name>
</gene>
<proteinExistence type="evidence at transcript level"/>
<feature type="chain" id="PRO_0000215174" description="Glycosyltransferase 6">
    <location>
        <begin position="1"/>
        <end position="432"/>
    </location>
</feature>
<feature type="topological domain" description="Cytoplasmic" evidence="2">
    <location>
        <begin position="1"/>
        <end position="18"/>
    </location>
</feature>
<feature type="transmembrane region" description="Helical; Signal-anchor for type II membrane protein" evidence="2">
    <location>
        <begin position="19"/>
        <end position="39"/>
    </location>
</feature>
<feature type="topological domain" description="Lumenal" evidence="2">
    <location>
        <begin position="40"/>
        <end position="432"/>
    </location>
</feature>
<feature type="glycosylation site" description="N-linked (GlcNAc...) asparagine" evidence="2">
    <location>
        <position position="315"/>
    </location>
</feature>
<feature type="sequence conflict" description="In Ref. 5; BT015600." evidence="3" ref="5">
    <original>I</original>
    <variation>T</variation>
    <location>
        <position position="393"/>
    </location>
</feature>
<name>GT6_ARATH</name>
<dbReference type="EC" id="2.4.-.-"/>
<dbReference type="EMBL" id="KJ138718">
    <property type="protein sequence ID" value="AHL38658.1"/>
    <property type="molecule type" value="mRNA"/>
</dbReference>
<dbReference type="EMBL" id="AL035605">
    <property type="protein sequence ID" value="CAB38308.1"/>
    <property type="molecule type" value="Genomic_DNA"/>
</dbReference>
<dbReference type="EMBL" id="AL161592">
    <property type="protein sequence ID" value="CAB80434.1"/>
    <property type="molecule type" value="Genomic_DNA"/>
</dbReference>
<dbReference type="EMBL" id="CP002687">
    <property type="protein sequence ID" value="AEE86828.1"/>
    <property type="molecule type" value="Genomic_DNA"/>
</dbReference>
<dbReference type="EMBL" id="BT026516">
    <property type="protein sequence ID" value="ABH04623.1"/>
    <property type="molecule type" value="mRNA"/>
</dbReference>
<dbReference type="EMBL" id="BT015600">
    <property type="status" value="NOT_ANNOTATED_CDS"/>
    <property type="molecule type" value="mRNA"/>
</dbReference>
<dbReference type="PIR" id="T04726">
    <property type="entry name" value="T04726"/>
</dbReference>
<dbReference type="RefSeq" id="NP_680773.1">
    <property type="nucleotide sequence ID" value="NM_148407.3"/>
</dbReference>
<dbReference type="SMR" id="Q9SZG1"/>
<dbReference type="BioGRID" id="15205">
    <property type="interactions" value="1"/>
</dbReference>
<dbReference type="FunCoup" id="Q9SZG1">
    <property type="interactions" value="5"/>
</dbReference>
<dbReference type="STRING" id="3702.Q9SZG1"/>
<dbReference type="CAZy" id="GT34">
    <property type="family name" value="Glycosyltransferase Family 34"/>
</dbReference>
<dbReference type="GlyCosmos" id="Q9SZG1">
    <property type="glycosylation" value="1 site, No reported glycans"/>
</dbReference>
<dbReference type="GlyGen" id="Q9SZG1">
    <property type="glycosylation" value="1 site"/>
</dbReference>
<dbReference type="PaxDb" id="3702-AT4G37690.1"/>
<dbReference type="ProteomicsDB" id="247310"/>
<dbReference type="DNASU" id="829924"/>
<dbReference type="EnsemblPlants" id="AT4G37690.1">
    <property type="protein sequence ID" value="AT4G37690.1"/>
    <property type="gene ID" value="AT4G37690"/>
</dbReference>
<dbReference type="GeneID" id="829924"/>
<dbReference type="Gramene" id="AT4G37690.1">
    <property type="protein sequence ID" value="AT4G37690.1"/>
    <property type="gene ID" value="AT4G37690"/>
</dbReference>
<dbReference type="KEGG" id="ath:AT4G37690"/>
<dbReference type="Araport" id="AT4G37690"/>
<dbReference type="TAIR" id="AT4G37690">
    <property type="gene designation" value="GT6"/>
</dbReference>
<dbReference type="eggNOG" id="KOG4748">
    <property type="taxonomic scope" value="Eukaryota"/>
</dbReference>
<dbReference type="HOGENOM" id="CLU_034328_0_0_1"/>
<dbReference type="InParanoid" id="Q9SZG1"/>
<dbReference type="OMA" id="MDLIDTW"/>
<dbReference type="OrthoDB" id="407658at2759"/>
<dbReference type="PhylomeDB" id="Q9SZG1"/>
<dbReference type="BioCyc" id="ARA:AT4G37690-MONOMER"/>
<dbReference type="PRO" id="PR:Q9SZG1"/>
<dbReference type="Proteomes" id="UP000006548">
    <property type="component" value="Chromosome 4"/>
</dbReference>
<dbReference type="ExpressionAtlas" id="Q9SZG1">
    <property type="expression patterns" value="baseline and differential"/>
</dbReference>
<dbReference type="GO" id="GO:0005768">
    <property type="term" value="C:endosome"/>
    <property type="evidence" value="ECO:0007005"/>
    <property type="project" value="TAIR"/>
</dbReference>
<dbReference type="GO" id="GO:0005794">
    <property type="term" value="C:Golgi apparatus"/>
    <property type="evidence" value="ECO:0007005"/>
    <property type="project" value="TAIR"/>
</dbReference>
<dbReference type="GO" id="GO:0000139">
    <property type="term" value="C:Golgi membrane"/>
    <property type="evidence" value="ECO:0007669"/>
    <property type="project" value="UniProtKB-SubCell"/>
</dbReference>
<dbReference type="GO" id="GO:0005802">
    <property type="term" value="C:trans-Golgi network"/>
    <property type="evidence" value="ECO:0007005"/>
    <property type="project" value="TAIR"/>
</dbReference>
<dbReference type="GO" id="GO:0008378">
    <property type="term" value="F:galactosyltransferase activity"/>
    <property type="evidence" value="ECO:0000315"/>
    <property type="project" value="TAIR"/>
</dbReference>
<dbReference type="FunFam" id="3.90.550.10:FF:000127">
    <property type="entry name" value="Probable glycosyltransferase 7"/>
    <property type="match status" value="1"/>
</dbReference>
<dbReference type="Gene3D" id="3.90.550.10">
    <property type="entry name" value="Spore Coat Polysaccharide Biosynthesis Protein SpsA, Chain A"/>
    <property type="match status" value="1"/>
</dbReference>
<dbReference type="InterPro" id="IPR008630">
    <property type="entry name" value="Glyco_trans_34"/>
</dbReference>
<dbReference type="InterPro" id="IPR029044">
    <property type="entry name" value="Nucleotide-diphossugar_trans"/>
</dbReference>
<dbReference type="PANTHER" id="PTHR31311:SF28">
    <property type="entry name" value="GLYCOSYLTRANSFERASE 6"/>
    <property type="match status" value="1"/>
</dbReference>
<dbReference type="PANTHER" id="PTHR31311">
    <property type="entry name" value="XYLOGLUCAN 6-XYLOSYLTRANSFERASE 5-RELATED-RELATED"/>
    <property type="match status" value="1"/>
</dbReference>
<dbReference type="Pfam" id="PF05637">
    <property type="entry name" value="Glyco_transf_34"/>
    <property type="match status" value="1"/>
</dbReference>